<accession>P63626</accession>
<accession>Q8P055</accession>
<comment type="catalytic activity">
    <reaction evidence="1">
        <text>L-aspartate + NH4(+) + ATP = L-asparagine + AMP + diphosphate + H(+)</text>
        <dbReference type="Rhea" id="RHEA:11372"/>
        <dbReference type="ChEBI" id="CHEBI:15378"/>
        <dbReference type="ChEBI" id="CHEBI:28938"/>
        <dbReference type="ChEBI" id="CHEBI:29991"/>
        <dbReference type="ChEBI" id="CHEBI:30616"/>
        <dbReference type="ChEBI" id="CHEBI:33019"/>
        <dbReference type="ChEBI" id="CHEBI:58048"/>
        <dbReference type="ChEBI" id="CHEBI:456215"/>
        <dbReference type="EC" id="6.3.1.1"/>
    </reaction>
</comment>
<comment type="pathway">
    <text evidence="1">Amino-acid biosynthesis; L-asparagine biosynthesis; L-asparagine from L-aspartate (ammonia route): step 1/1.</text>
</comment>
<comment type="subcellular location">
    <subcellularLocation>
        <location evidence="1">Cytoplasm</location>
    </subcellularLocation>
</comment>
<comment type="similarity">
    <text evidence="1">Belongs to the class-II aminoacyl-tRNA synthetase family. AsnA subfamily.</text>
</comment>
<name>ASNA_STRP8</name>
<sequence length="330" mass="37399">MKKSFIHQQEEISFVKNTFTQYLIAKLDVVEVQGPILSRVGDGMQDNLSGTENPVSVNVLKIPNATFEVVHSLAKWKRHTLARFGFNEGEGLVVNMKALRPDEDSLDQTHSVYVDQWDWEKVIPDGKRNLAYLKETVETIYKVIRLTELAVEARYDIEAVLPKKITFIHTEELVAKYPDLTPKERENAITKEFGAVFLIGIGGVLPDGKPHDGRAPDYDDWTTETENGYHGLNGDILVWNDQLGSAFELSSMGIRVDEEALKRQVEMTGDQDRLAFDWHKSLLNGLFPLTIGGGIGQSRMVMFLLRKKHIGEVQTSVWPQEVRDSYDNIL</sequence>
<evidence type="ECO:0000255" key="1">
    <source>
        <dbReference type="HAMAP-Rule" id="MF_00555"/>
    </source>
</evidence>
<dbReference type="EC" id="6.3.1.1" evidence="1"/>
<dbReference type="EMBL" id="AE009949">
    <property type="protein sequence ID" value="AAL98123.1"/>
    <property type="molecule type" value="Genomic_DNA"/>
</dbReference>
<dbReference type="RefSeq" id="WP_002983817.1">
    <property type="nucleotide sequence ID" value="NC_003485.1"/>
</dbReference>
<dbReference type="SMR" id="P63626"/>
<dbReference type="KEGG" id="spm:spyM18_1556"/>
<dbReference type="HOGENOM" id="CLU_071543_0_0_9"/>
<dbReference type="UniPathway" id="UPA00134">
    <property type="reaction ID" value="UER00194"/>
</dbReference>
<dbReference type="GO" id="GO:0005829">
    <property type="term" value="C:cytosol"/>
    <property type="evidence" value="ECO:0007669"/>
    <property type="project" value="TreeGrafter"/>
</dbReference>
<dbReference type="GO" id="GO:0004071">
    <property type="term" value="F:aspartate-ammonia ligase activity"/>
    <property type="evidence" value="ECO:0007669"/>
    <property type="project" value="UniProtKB-UniRule"/>
</dbReference>
<dbReference type="GO" id="GO:0005524">
    <property type="term" value="F:ATP binding"/>
    <property type="evidence" value="ECO:0007669"/>
    <property type="project" value="UniProtKB-UniRule"/>
</dbReference>
<dbReference type="GO" id="GO:0140096">
    <property type="term" value="F:catalytic activity, acting on a protein"/>
    <property type="evidence" value="ECO:0007669"/>
    <property type="project" value="UniProtKB-ARBA"/>
</dbReference>
<dbReference type="GO" id="GO:0016740">
    <property type="term" value="F:transferase activity"/>
    <property type="evidence" value="ECO:0007669"/>
    <property type="project" value="UniProtKB-ARBA"/>
</dbReference>
<dbReference type="GO" id="GO:0070981">
    <property type="term" value="P:L-asparagine biosynthetic process"/>
    <property type="evidence" value="ECO:0007669"/>
    <property type="project" value="UniProtKB-UniRule"/>
</dbReference>
<dbReference type="CDD" id="cd00645">
    <property type="entry name" value="AsnA"/>
    <property type="match status" value="1"/>
</dbReference>
<dbReference type="Gene3D" id="3.30.930.10">
    <property type="entry name" value="Bira Bifunctional Protein, Domain 2"/>
    <property type="match status" value="1"/>
</dbReference>
<dbReference type="HAMAP" id="MF_00555">
    <property type="entry name" value="AsnA"/>
    <property type="match status" value="1"/>
</dbReference>
<dbReference type="InterPro" id="IPR006195">
    <property type="entry name" value="aa-tRNA-synth_II"/>
</dbReference>
<dbReference type="InterPro" id="IPR045864">
    <property type="entry name" value="aa-tRNA-synth_II/BPL/LPL"/>
</dbReference>
<dbReference type="InterPro" id="IPR004618">
    <property type="entry name" value="AsnA"/>
</dbReference>
<dbReference type="NCBIfam" id="TIGR00669">
    <property type="entry name" value="asnA"/>
    <property type="match status" value="1"/>
</dbReference>
<dbReference type="PANTHER" id="PTHR30073">
    <property type="entry name" value="ASPARTATE--AMMONIA LIGASE"/>
    <property type="match status" value="1"/>
</dbReference>
<dbReference type="PANTHER" id="PTHR30073:SF5">
    <property type="entry name" value="ASPARTATE--AMMONIA LIGASE"/>
    <property type="match status" value="1"/>
</dbReference>
<dbReference type="Pfam" id="PF03590">
    <property type="entry name" value="AsnA"/>
    <property type="match status" value="1"/>
</dbReference>
<dbReference type="PIRSF" id="PIRSF001555">
    <property type="entry name" value="Asp_ammon_ligase"/>
    <property type="match status" value="1"/>
</dbReference>
<dbReference type="SUPFAM" id="SSF55681">
    <property type="entry name" value="Class II aaRS and biotin synthetases"/>
    <property type="match status" value="1"/>
</dbReference>
<dbReference type="PROSITE" id="PS50862">
    <property type="entry name" value="AA_TRNA_LIGASE_II"/>
    <property type="match status" value="1"/>
</dbReference>
<protein>
    <recommendedName>
        <fullName evidence="1">Aspartate--ammonia ligase</fullName>
        <ecNumber evidence="1">6.3.1.1</ecNumber>
    </recommendedName>
    <alternativeName>
        <fullName evidence="1">Asparagine synthetase A</fullName>
    </alternativeName>
</protein>
<gene>
    <name evidence="1" type="primary">asnA</name>
    <name type="ordered locus">spyM18_1556</name>
</gene>
<organism>
    <name type="scientific">Streptococcus pyogenes serotype M18 (strain MGAS8232)</name>
    <dbReference type="NCBI Taxonomy" id="186103"/>
    <lineage>
        <taxon>Bacteria</taxon>
        <taxon>Bacillati</taxon>
        <taxon>Bacillota</taxon>
        <taxon>Bacilli</taxon>
        <taxon>Lactobacillales</taxon>
        <taxon>Streptococcaceae</taxon>
        <taxon>Streptococcus</taxon>
    </lineage>
</organism>
<proteinExistence type="inferred from homology"/>
<feature type="chain" id="PRO_0000195896" description="Aspartate--ammonia ligase">
    <location>
        <begin position="1"/>
        <end position="330"/>
    </location>
</feature>
<reference key="1">
    <citation type="journal article" date="2002" name="Proc. Natl. Acad. Sci. U.S.A.">
        <title>Genome sequence and comparative microarray analysis of serotype M18 group A Streptococcus strains associated with acute rheumatic fever outbreaks.</title>
        <authorList>
            <person name="Smoot J.C."/>
            <person name="Barbian K.D."/>
            <person name="Van Gompel J.J."/>
            <person name="Smoot L.M."/>
            <person name="Chaussee M.S."/>
            <person name="Sylva G.L."/>
            <person name="Sturdevant D.E."/>
            <person name="Ricklefs S.M."/>
            <person name="Porcella S.F."/>
            <person name="Parkins L.D."/>
            <person name="Beres S.B."/>
            <person name="Campbell D.S."/>
            <person name="Smith T.M."/>
            <person name="Zhang Q."/>
            <person name="Kapur V."/>
            <person name="Daly J.A."/>
            <person name="Veasy L.G."/>
            <person name="Musser J.M."/>
        </authorList>
    </citation>
    <scope>NUCLEOTIDE SEQUENCE [LARGE SCALE GENOMIC DNA]</scope>
    <source>
        <strain>MGAS8232</strain>
    </source>
</reference>
<keyword id="KW-0028">Amino-acid biosynthesis</keyword>
<keyword id="KW-0061">Asparagine biosynthesis</keyword>
<keyword id="KW-0067">ATP-binding</keyword>
<keyword id="KW-0963">Cytoplasm</keyword>
<keyword id="KW-0436">Ligase</keyword>
<keyword id="KW-0547">Nucleotide-binding</keyword>